<name>AP4M1_MOUSE</name>
<feature type="chain" id="PRO_0000193788" description="AP-4 complex subunit mu-1">
    <location>
        <begin position="1"/>
        <end position="449"/>
    </location>
</feature>
<feature type="domain" description="MHD" evidence="3">
    <location>
        <begin position="184"/>
        <end position="448"/>
    </location>
</feature>
<gene>
    <name evidence="6" type="primary">Ap4m1</name>
</gene>
<comment type="function">
    <text evidence="1 4">Component of the adaptor protein complex 4 (AP-4). Adaptor protein complexes are vesicle coat components involved both in vesicle formation and cargo selection. They control the vesicular transport of proteins in different trafficking pathways. AP-4 forms a non clathrin-associated coat on vesicles departing the trans-Golgi network (TGN) and may be involved in the targeting of proteins from the trans-Golgi network (TGN) to the endosomal-lysosomal system (By similarity). It is also involved in protein sorting to the basolateral membrane in epithelial cells and the proper asymmetric localization of somatodendritic proteins in neurons (PubMed:18341993). Within AP-4, the mu-type subunit AP4M1 is directly involved in the recognition and binding of tyrosine-based sorting signals found in the cytoplasmic part of cargos. The adaptor protein complex 4 (AP-4) may also recognize other types of sorting signal (By similarity).</text>
</comment>
<comment type="subunit">
    <text evidence="1 4">Adaptor protein complex 4 (AP-4) is a heterotetramer composed of two large adaptins (epsilon-type subunit AP4E1 and beta-type subunit AP4B1), a medium adaptin (mu-type subunit AP4M1) and a small adaptin (sigma-type AP4S1). Interacts with tyrosine-based sorting signals on the cytoplasmic tail of cargo proteins such as APP, ATG9A, LAMP2 and NAGPA. Interacts with the C-terminal domain of GRID2 (By similarity). Interacts with GRIA1 and GRIA2; the interaction is indirect via CACNG3 (PubMed:18341993). Interacts with CACNG3; CACNG3 associates GRIA1 and GRIA2 with the adaptor protein complex 4 (AP-4) to target them to the somatodendritic compartment of neurons (PubMed:18341993). Interacts with HOOK1 and HOOK2; the interactions are direct, mediate the interaction between FTS-Hook-FHIP (FHF) complex and AP-4 and the perinuclear distribution of AP-4 (By similarity).</text>
</comment>
<comment type="subcellular location">
    <subcellularLocation>
        <location evidence="1">Golgi apparatus</location>
        <location evidence="1">trans-Golgi network membrane</location>
        <topology evidence="1">Peripheral membrane protein</topology>
    </subcellularLocation>
    <subcellularLocation>
        <location evidence="1">Early endosome</location>
    </subcellularLocation>
    <text evidence="2">Found in soma and dendritic shafts of neuronal cells.</text>
</comment>
<comment type="similarity">
    <text evidence="5">Belongs to the adaptor complexes medium subunit family.</text>
</comment>
<accession>Q9JKC7</accession>
<dbReference type="EMBL" id="AF242858">
    <property type="protein sequence ID" value="AAF63513.1"/>
    <property type="molecule type" value="mRNA"/>
</dbReference>
<dbReference type="EMBL" id="BC011174">
    <property type="protein sequence ID" value="AAH11174.1"/>
    <property type="molecule type" value="mRNA"/>
</dbReference>
<dbReference type="CCDS" id="CCDS19794.1"/>
<dbReference type="RefSeq" id="NP_067367.3">
    <property type="nucleotide sequence ID" value="NM_021392.4"/>
</dbReference>
<dbReference type="SMR" id="Q9JKC7"/>
<dbReference type="BioGRID" id="198137">
    <property type="interactions" value="1"/>
</dbReference>
<dbReference type="ComplexPortal" id="CPX-5154">
    <property type="entry name" value="AP-4 Adaptor complex"/>
</dbReference>
<dbReference type="FunCoup" id="Q9JKC7">
    <property type="interactions" value="2319"/>
</dbReference>
<dbReference type="STRING" id="10090.ENSMUSP00000019662"/>
<dbReference type="iPTMnet" id="Q9JKC7"/>
<dbReference type="PhosphoSitePlus" id="Q9JKC7"/>
<dbReference type="PaxDb" id="10090-ENSMUSP00000019662"/>
<dbReference type="ProteomicsDB" id="296213"/>
<dbReference type="Pumba" id="Q9JKC7"/>
<dbReference type="Antibodypedia" id="30540">
    <property type="antibodies" value="175 antibodies from 25 providers"/>
</dbReference>
<dbReference type="DNASU" id="11781"/>
<dbReference type="Ensembl" id="ENSMUST00000019662.11">
    <property type="protein sequence ID" value="ENSMUSP00000019662.5"/>
    <property type="gene ID" value="ENSMUSG00000019518.12"/>
</dbReference>
<dbReference type="GeneID" id="11781"/>
<dbReference type="KEGG" id="mmu:11781"/>
<dbReference type="UCSC" id="uc009aev.2">
    <property type="organism name" value="mouse"/>
</dbReference>
<dbReference type="AGR" id="MGI:1337063"/>
<dbReference type="CTD" id="9179"/>
<dbReference type="MGI" id="MGI:1337063">
    <property type="gene designation" value="Ap4m1"/>
</dbReference>
<dbReference type="VEuPathDB" id="HostDB:ENSMUSG00000019518"/>
<dbReference type="eggNOG" id="KOG0937">
    <property type="taxonomic scope" value="Eukaryota"/>
</dbReference>
<dbReference type="GeneTree" id="ENSGT00940000159929"/>
<dbReference type="HOGENOM" id="CLU_026996_5_0_1"/>
<dbReference type="InParanoid" id="Q9JKC7"/>
<dbReference type="OMA" id="DYGYIQN"/>
<dbReference type="OrthoDB" id="10259133at2759"/>
<dbReference type="PhylomeDB" id="Q9JKC7"/>
<dbReference type="TreeFam" id="TF329745"/>
<dbReference type="Reactome" id="R-MMU-432720">
    <property type="pathway name" value="Lysosome Vesicle Biogenesis"/>
</dbReference>
<dbReference type="BioGRID-ORCS" id="11781">
    <property type="hits" value="5 hits in 76 CRISPR screens"/>
</dbReference>
<dbReference type="ChiTaRS" id="Ap4m1">
    <property type="organism name" value="mouse"/>
</dbReference>
<dbReference type="PRO" id="PR:Q9JKC7"/>
<dbReference type="Proteomes" id="UP000000589">
    <property type="component" value="Chromosome 5"/>
</dbReference>
<dbReference type="RNAct" id="Q9JKC7">
    <property type="molecule type" value="protein"/>
</dbReference>
<dbReference type="Bgee" id="ENSMUSG00000019518">
    <property type="expression patterns" value="Expressed in spermatid and 143 other cell types or tissues"/>
</dbReference>
<dbReference type="ExpressionAtlas" id="Q9JKC7">
    <property type="expression patterns" value="baseline and differential"/>
</dbReference>
<dbReference type="GO" id="GO:0030124">
    <property type="term" value="C:AP-4 adaptor complex"/>
    <property type="evidence" value="ECO:0000250"/>
    <property type="project" value="UniProtKB"/>
</dbReference>
<dbReference type="GO" id="GO:0030131">
    <property type="term" value="C:clathrin adaptor complex"/>
    <property type="evidence" value="ECO:0007669"/>
    <property type="project" value="InterPro"/>
</dbReference>
<dbReference type="GO" id="GO:0005829">
    <property type="term" value="C:cytosol"/>
    <property type="evidence" value="ECO:0007669"/>
    <property type="project" value="GOC"/>
</dbReference>
<dbReference type="GO" id="GO:0005769">
    <property type="term" value="C:early endosome"/>
    <property type="evidence" value="ECO:0000250"/>
    <property type="project" value="UniProtKB"/>
</dbReference>
<dbReference type="GO" id="GO:0005802">
    <property type="term" value="C:trans-Golgi network"/>
    <property type="evidence" value="ECO:0000250"/>
    <property type="project" value="UniProtKB"/>
</dbReference>
<dbReference type="GO" id="GO:0019904">
    <property type="term" value="F:protein domain specific binding"/>
    <property type="evidence" value="ECO:0007669"/>
    <property type="project" value="Ensembl"/>
</dbReference>
<dbReference type="GO" id="GO:0000045">
    <property type="term" value="P:autophagosome assembly"/>
    <property type="evidence" value="ECO:0000250"/>
    <property type="project" value="UniProtKB"/>
</dbReference>
<dbReference type="GO" id="GO:0006895">
    <property type="term" value="P:Golgi to endosome transport"/>
    <property type="evidence" value="ECO:0000250"/>
    <property type="project" value="UniProtKB"/>
</dbReference>
<dbReference type="GO" id="GO:0090160">
    <property type="term" value="P:Golgi to lysosome transport"/>
    <property type="evidence" value="ECO:0000250"/>
    <property type="project" value="UniProtKB"/>
</dbReference>
<dbReference type="GO" id="GO:0006886">
    <property type="term" value="P:intracellular protein transport"/>
    <property type="evidence" value="ECO:0000250"/>
    <property type="project" value="UniProtKB"/>
</dbReference>
<dbReference type="GO" id="GO:0008104">
    <property type="term" value="P:protein localization"/>
    <property type="evidence" value="ECO:0000315"/>
    <property type="project" value="UniProtKB"/>
</dbReference>
<dbReference type="GO" id="GO:1903361">
    <property type="term" value="P:protein localization to basolateral plasma membrane"/>
    <property type="evidence" value="ECO:0000250"/>
    <property type="project" value="UniProtKB"/>
</dbReference>
<dbReference type="GO" id="GO:0006605">
    <property type="term" value="P:protein targeting"/>
    <property type="evidence" value="ECO:0000315"/>
    <property type="project" value="UniProtKB"/>
</dbReference>
<dbReference type="GO" id="GO:0006622">
    <property type="term" value="P:protein targeting to lysosome"/>
    <property type="evidence" value="ECO:0007669"/>
    <property type="project" value="Ensembl"/>
</dbReference>
<dbReference type="GO" id="GO:0016192">
    <property type="term" value="P:vesicle-mediated transport"/>
    <property type="evidence" value="ECO:0000304"/>
    <property type="project" value="MGI"/>
</dbReference>
<dbReference type="CDD" id="cd09253">
    <property type="entry name" value="AP-4_Mu4_Cterm"/>
    <property type="match status" value="1"/>
</dbReference>
<dbReference type="CDD" id="cd14838">
    <property type="entry name" value="AP4_Mu_N"/>
    <property type="match status" value="1"/>
</dbReference>
<dbReference type="FunFam" id="2.60.40.1170:FF:000021">
    <property type="entry name" value="AP-4 complex subunit mu-1 isoform X1"/>
    <property type="match status" value="1"/>
</dbReference>
<dbReference type="FunFam" id="3.30.450.60:FF:000018">
    <property type="entry name" value="AP-4 complex subunit mu-1 isoform X1"/>
    <property type="match status" value="1"/>
</dbReference>
<dbReference type="Gene3D" id="3.30.450.60">
    <property type="match status" value="1"/>
</dbReference>
<dbReference type="Gene3D" id="2.60.40.1170">
    <property type="entry name" value="Mu homology domain, subdomain B"/>
    <property type="match status" value="2"/>
</dbReference>
<dbReference type="InterPro" id="IPR050431">
    <property type="entry name" value="Adaptor_comp_med_subunit"/>
</dbReference>
<dbReference type="InterPro" id="IPR036168">
    <property type="entry name" value="AP2_Mu_C_sf"/>
</dbReference>
<dbReference type="InterPro" id="IPR001392">
    <property type="entry name" value="Clathrin_mu"/>
</dbReference>
<dbReference type="InterPro" id="IPR018240">
    <property type="entry name" value="Clathrin_mu_CS"/>
</dbReference>
<dbReference type="InterPro" id="IPR011012">
    <property type="entry name" value="Longin-like_dom_sf"/>
</dbReference>
<dbReference type="InterPro" id="IPR028565">
    <property type="entry name" value="MHD"/>
</dbReference>
<dbReference type="PANTHER" id="PTHR10529">
    <property type="entry name" value="AP COMPLEX SUBUNIT MU"/>
    <property type="match status" value="1"/>
</dbReference>
<dbReference type="Pfam" id="PF00928">
    <property type="entry name" value="Adap_comp_sub"/>
    <property type="match status" value="1"/>
</dbReference>
<dbReference type="PIRSF" id="PIRSF005992">
    <property type="entry name" value="Clathrin_mu"/>
    <property type="match status" value="1"/>
</dbReference>
<dbReference type="PRINTS" id="PR00314">
    <property type="entry name" value="CLATHRINADPT"/>
</dbReference>
<dbReference type="SUPFAM" id="SSF49447">
    <property type="entry name" value="Second domain of Mu2 adaptin subunit (ap50) of ap2 adaptor"/>
    <property type="match status" value="1"/>
</dbReference>
<dbReference type="SUPFAM" id="SSF64356">
    <property type="entry name" value="SNARE-like"/>
    <property type="match status" value="1"/>
</dbReference>
<dbReference type="PROSITE" id="PS00991">
    <property type="entry name" value="CLAT_ADAPTOR_M_2"/>
    <property type="match status" value="1"/>
</dbReference>
<dbReference type="PROSITE" id="PS51072">
    <property type="entry name" value="MHD"/>
    <property type="match status" value="1"/>
</dbReference>
<evidence type="ECO:0000250" key="1">
    <source>
        <dbReference type="UniProtKB" id="O00189"/>
    </source>
</evidence>
<evidence type="ECO:0000250" key="2">
    <source>
        <dbReference type="UniProtKB" id="Q2PWT8"/>
    </source>
</evidence>
<evidence type="ECO:0000255" key="3">
    <source>
        <dbReference type="PROSITE-ProRule" id="PRU00404"/>
    </source>
</evidence>
<evidence type="ECO:0000269" key="4">
    <source>
    </source>
</evidence>
<evidence type="ECO:0000305" key="5"/>
<evidence type="ECO:0000312" key="6">
    <source>
        <dbReference type="MGI" id="MGI:1337063"/>
    </source>
</evidence>
<proteinExistence type="evidence at protein level"/>
<organism>
    <name type="scientific">Mus musculus</name>
    <name type="common">Mouse</name>
    <dbReference type="NCBI Taxonomy" id="10090"/>
    <lineage>
        <taxon>Eukaryota</taxon>
        <taxon>Metazoa</taxon>
        <taxon>Chordata</taxon>
        <taxon>Craniata</taxon>
        <taxon>Vertebrata</taxon>
        <taxon>Euteleostomi</taxon>
        <taxon>Mammalia</taxon>
        <taxon>Eutheria</taxon>
        <taxon>Euarchontoglires</taxon>
        <taxon>Glires</taxon>
        <taxon>Rodentia</taxon>
        <taxon>Myomorpha</taxon>
        <taxon>Muroidea</taxon>
        <taxon>Muridae</taxon>
        <taxon>Murinae</taxon>
        <taxon>Mus</taxon>
        <taxon>Mus</taxon>
    </lineage>
</organism>
<sequence length="449" mass="49509">MISQFFILSSKGDPLIYKDFRGDSGGRDVAELFYRKLTGLPGGESPVVMYHGDRHFIHIRHSGLYLVATTLENVSPFSLLELLSRLATLLGDYCGSLNEGTISRNVALVYELLDEVLDYGYVQTTSTEMLRNFIQTEAVVSKPFSLFDLSSVGLFGAETQQNKVAPSSAASRPVLSSRSDQSQKNEVFLDVVERLSVLIASNGSLLKVDVQGEIRLKSFLPSGSEICIGLTEEFCVGKSELRGYGPGIRVDEVSFHSSVNLDEFESHRILRLQPPQGELTVMRYQLSDDLPSPLPFRLFPSVQWDQGSGRLQVYLKLRCDLPPKSQALNIHLHLPLPRGVISLSQELSSPDQKAELGEGALHWDLPRVQGGSQLSGLFQMDVPGLQGLPNHGPSPLGLGPASLSFELPRHTCSGLQVRFLRLSFSACGNANPHKWVRHLSHSNAYVIRI</sequence>
<reference key="1">
    <citation type="submission" date="2000-03" db="EMBL/GenBank/DDBJ databases">
        <title>Mus musculus adaptor-related protein complex AP-4 mu4 subunit.</title>
        <authorList>
            <person name="Werner H."/>
            <person name="Nave K.-A."/>
        </authorList>
    </citation>
    <scope>NUCLEOTIDE SEQUENCE [MRNA]</scope>
</reference>
<reference key="2">
    <citation type="journal article" date="2004" name="Genome Res.">
        <title>The status, quality, and expansion of the NIH full-length cDNA project: the Mammalian Gene Collection (MGC).</title>
        <authorList>
            <consortium name="The MGC Project Team"/>
        </authorList>
    </citation>
    <scope>NUCLEOTIDE SEQUENCE [LARGE SCALE MRNA]</scope>
    <source>
        <strain>FVB/N</strain>
        <tissue>Colon</tissue>
    </source>
</reference>
<reference key="3">
    <citation type="journal article" date="2008" name="Neuron">
        <title>Accumulation of AMPA receptors in autophagosomes in neuronal axons lacking adaptor protein AP-4.</title>
        <authorList>
            <person name="Matsuda S."/>
            <person name="Miura E."/>
            <person name="Matsuda K."/>
            <person name="Kakegawa W."/>
            <person name="Kohda K."/>
            <person name="Watanabe M."/>
            <person name="Yuzaki M."/>
        </authorList>
    </citation>
    <scope>FUNCTION</scope>
    <scope>INTERACTION WITH CACNG3; GRIA1 AND GRIA2</scope>
</reference>
<protein>
    <recommendedName>
        <fullName evidence="5">AP-4 complex subunit mu-1</fullName>
    </recommendedName>
    <alternativeName>
        <fullName>AP-4 adaptor complex mu subunit</fullName>
    </alternativeName>
    <alternativeName>
        <fullName>Adaptor-related protein complex 4 subunit mu-1</fullName>
    </alternativeName>
    <alternativeName>
        <fullName>Mu subunit of AP-4</fullName>
    </alternativeName>
    <alternativeName>
        <fullName>Mu-adaptin-related protein 2</fullName>
        <shortName>mu-ARP2</shortName>
    </alternativeName>
    <alternativeName>
        <fullName>Mu4-adaptin</fullName>
        <shortName>mu4</shortName>
    </alternativeName>
</protein>
<keyword id="KW-0967">Endosome</keyword>
<keyword id="KW-0333">Golgi apparatus</keyword>
<keyword id="KW-0472">Membrane</keyword>
<keyword id="KW-0653">Protein transport</keyword>
<keyword id="KW-1185">Reference proteome</keyword>
<keyword id="KW-0813">Transport</keyword>